<evidence type="ECO:0000255" key="1">
    <source>
        <dbReference type="HAMAP-Rule" id="MF_01365"/>
    </source>
</evidence>
<evidence type="ECO:0000305" key="2"/>
<accession>A0A0M9ADP1</accession>
<accession>Q5SHQ3</accession>
<sequence length="180" mass="19641">MSRIGRLPIPVPKGVQVQVSPGLVKVKGPKGELSVPVSPELKVVVEENVVRVERPSDERRHRSLHGLTRTLIANAVKGVSEGYVKELLIKGIGYRARLVGRSIELTVGFSHPVVVEPPEGITFEVPEPTRIRVLGIDKQKVGQVAADIRAIKKPSAYHEKGIYYADEPVRLKPGKAGAKK</sequence>
<protein>
    <recommendedName>
        <fullName evidence="1">Large ribosomal subunit protein uL6</fullName>
    </recommendedName>
    <alternativeName>
        <fullName evidence="2">50S ribosomal protein L6</fullName>
    </alternativeName>
</protein>
<name>RL6_THEAQ</name>
<proteinExistence type="inferred from homology"/>
<gene>
    <name evidence="1" type="primary">rplF</name>
    <name type="ORF">BVI061214_01035</name>
</gene>
<keyword id="KW-0687">Ribonucleoprotein</keyword>
<keyword id="KW-0689">Ribosomal protein</keyword>
<keyword id="KW-0694">RNA-binding</keyword>
<keyword id="KW-0699">rRNA-binding</keyword>
<comment type="function">
    <text evidence="1">This protein binds to the 23S rRNA, and is important in its secondary structure. It is located near the subunit interface in the base of the L7/L12 stalk, and near the tRNA binding site of the peptidyltransferase center.</text>
</comment>
<comment type="subunit">
    <text evidence="1">Part of the 50S ribosomal subunit.</text>
</comment>
<comment type="similarity">
    <text evidence="1">Belongs to the universal ribosomal protein uL6 family.</text>
</comment>
<dbReference type="EMBL" id="LHCI01000106">
    <property type="protein sequence ID" value="KOX89852.1"/>
    <property type="molecule type" value="Genomic_DNA"/>
</dbReference>
<dbReference type="EMBL" id="X56552">
    <property type="protein sequence ID" value="CAA39899.1"/>
    <property type="molecule type" value="Genomic_DNA"/>
</dbReference>
<dbReference type="RefSeq" id="WP_003043925.1">
    <property type="nucleotide sequence ID" value="NZ_LHCI01000106.1"/>
</dbReference>
<dbReference type="SMR" id="A0A0M9ADP1"/>
<dbReference type="IntAct" id="A0A0M9ADP1">
    <property type="interactions" value="3"/>
</dbReference>
<dbReference type="PATRIC" id="fig|271.14.peg.1111"/>
<dbReference type="Proteomes" id="UP000037685">
    <property type="component" value="Unassembled WGS sequence"/>
</dbReference>
<dbReference type="GO" id="GO:0022625">
    <property type="term" value="C:cytosolic large ribosomal subunit"/>
    <property type="evidence" value="ECO:0007669"/>
    <property type="project" value="TreeGrafter"/>
</dbReference>
<dbReference type="GO" id="GO:0019843">
    <property type="term" value="F:rRNA binding"/>
    <property type="evidence" value="ECO:0007669"/>
    <property type="project" value="UniProtKB-UniRule"/>
</dbReference>
<dbReference type="GO" id="GO:0003735">
    <property type="term" value="F:structural constituent of ribosome"/>
    <property type="evidence" value="ECO:0007669"/>
    <property type="project" value="InterPro"/>
</dbReference>
<dbReference type="GO" id="GO:0002181">
    <property type="term" value="P:cytoplasmic translation"/>
    <property type="evidence" value="ECO:0007669"/>
    <property type="project" value="TreeGrafter"/>
</dbReference>
<dbReference type="FunFam" id="3.90.930.12:FF:000001">
    <property type="entry name" value="50S ribosomal protein L6"/>
    <property type="match status" value="1"/>
</dbReference>
<dbReference type="FunFam" id="3.90.930.12:FF:000002">
    <property type="entry name" value="50S ribosomal protein L6"/>
    <property type="match status" value="1"/>
</dbReference>
<dbReference type="Gene3D" id="3.90.930.12">
    <property type="entry name" value="Ribosomal protein L6, alpha-beta domain"/>
    <property type="match status" value="2"/>
</dbReference>
<dbReference type="HAMAP" id="MF_01365_B">
    <property type="entry name" value="Ribosomal_uL6_B"/>
    <property type="match status" value="1"/>
</dbReference>
<dbReference type="InterPro" id="IPR000702">
    <property type="entry name" value="Ribosomal_uL6-like"/>
</dbReference>
<dbReference type="InterPro" id="IPR036789">
    <property type="entry name" value="Ribosomal_uL6-like_a/b-dom_sf"/>
</dbReference>
<dbReference type="InterPro" id="IPR020040">
    <property type="entry name" value="Ribosomal_uL6_a/b-dom"/>
</dbReference>
<dbReference type="InterPro" id="IPR019906">
    <property type="entry name" value="Ribosomal_uL6_bac-type"/>
</dbReference>
<dbReference type="NCBIfam" id="TIGR03654">
    <property type="entry name" value="L6_bact"/>
    <property type="match status" value="1"/>
</dbReference>
<dbReference type="PANTHER" id="PTHR11655">
    <property type="entry name" value="60S/50S RIBOSOMAL PROTEIN L6/L9"/>
    <property type="match status" value="1"/>
</dbReference>
<dbReference type="PANTHER" id="PTHR11655:SF14">
    <property type="entry name" value="LARGE RIBOSOMAL SUBUNIT PROTEIN UL6M"/>
    <property type="match status" value="1"/>
</dbReference>
<dbReference type="Pfam" id="PF00347">
    <property type="entry name" value="Ribosomal_L6"/>
    <property type="match status" value="2"/>
</dbReference>
<dbReference type="PIRSF" id="PIRSF002162">
    <property type="entry name" value="Ribosomal_L6"/>
    <property type="match status" value="1"/>
</dbReference>
<dbReference type="PRINTS" id="PR00059">
    <property type="entry name" value="RIBOSOMALL6"/>
</dbReference>
<dbReference type="SUPFAM" id="SSF56053">
    <property type="entry name" value="Ribosomal protein L6"/>
    <property type="match status" value="2"/>
</dbReference>
<feature type="chain" id="PRO_0000439213" description="Large ribosomal subunit protein uL6">
    <location>
        <begin position="1"/>
        <end position="180"/>
    </location>
</feature>
<reference key="1">
    <citation type="submission" date="2015-07" db="EMBL/GenBank/DDBJ databases">
        <authorList>
            <person name="Zylicz-Stachula A."/>
            <person name="Jezewska-Frackowiak J."/>
            <person name="Czajkowska E."/>
            <person name="Skowron P.M."/>
        </authorList>
    </citation>
    <scope>NUCLEOTIDE SEQUENCE [LARGE SCALE GENOMIC DNA]</scope>
    <source>
        <strain>ATCC 25104 / DSM 625 / JCM 10724 / NBRC 103206 / NCIMB 11243 / YT-1</strain>
    </source>
</reference>
<reference key="2">
    <citation type="journal article" date="1991" name="Eur. J. Biochem.">
        <title>Analysis of the spc ribosomal protein operon of Thermus aquaticus.</title>
        <authorList>
            <person name="Jahn O."/>
            <person name="Hartmann R.K."/>
            <person name="Erdmann V.A."/>
        </authorList>
    </citation>
    <scope>NUCLEOTIDE SEQUENCE [GENOMIC DNA] OF 1-131</scope>
    <source>
        <strain>EP 00276</strain>
    </source>
</reference>
<organism>
    <name type="scientific">Thermus aquaticus</name>
    <dbReference type="NCBI Taxonomy" id="271"/>
    <lineage>
        <taxon>Bacteria</taxon>
        <taxon>Thermotogati</taxon>
        <taxon>Deinococcota</taxon>
        <taxon>Deinococci</taxon>
        <taxon>Thermales</taxon>
        <taxon>Thermaceae</taxon>
        <taxon>Thermus</taxon>
    </lineage>
</organism>